<name>APCD_CYAPA</name>
<comment type="function">
    <text>Allophycocyanin is a photosynthetic bile pigment-protein complex with maximum absorption at approximately 650 nanometers.</text>
</comment>
<comment type="subcellular location">
    <subcellularLocation>
        <location evidence="1">Plastid</location>
        <location evidence="1">Cyanelle thylakoid membrane</location>
        <topology evidence="1">Peripheral membrane protein</topology>
        <orientation evidence="1">Stromal side</orientation>
    </subcellularLocation>
    <text evidence="1">Forms the core of the phycobilisome.</text>
</comment>
<comment type="PTM">
    <text evidence="1">Contains one covalently linked phycocyanobilin chromophore.</text>
</comment>
<comment type="similarity">
    <text evidence="2">Belongs to the phycobiliprotein family.</text>
</comment>
<evidence type="ECO:0000250" key="1"/>
<evidence type="ECO:0000305" key="2"/>
<protein>
    <recommendedName>
        <fullName>Allophycocyanin alpha-B chain</fullName>
    </recommendedName>
    <alternativeName>
        <fullName>Allophycocyanin gamma chain</fullName>
    </alternativeName>
</protein>
<accession>P16282</accession>
<feature type="chain" id="PRO_0000199108" description="Allophycocyanin alpha-B chain">
    <location>
        <begin position="1"/>
        <end position="162"/>
    </location>
</feature>
<feature type="binding site" description="covalent" evidence="1">
    <location>
        <position position="81"/>
    </location>
    <ligand>
        <name>(2R,3E)-phycocyanobilin</name>
        <dbReference type="ChEBI" id="CHEBI:85275"/>
    </ligand>
</feature>
<feature type="modified residue" description="N4-methylasparagine" evidence="1">
    <location>
        <position position="71"/>
    </location>
</feature>
<dbReference type="EMBL" id="X51965">
    <property type="protein sequence ID" value="CAA36224.1"/>
    <property type="molecule type" value="Genomic_DNA"/>
</dbReference>
<dbReference type="EMBL" id="U30821">
    <property type="protein sequence ID" value="AAA81215.1"/>
    <property type="molecule type" value="Genomic_DNA"/>
</dbReference>
<dbReference type="PIR" id="S15932">
    <property type="entry name" value="S15932"/>
</dbReference>
<dbReference type="RefSeq" id="NP_043184.1">
    <property type="nucleotide sequence ID" value="NC_001675.1"/>
</dbReference>
<dbReference type="SMR" id="P16282"/>
<dbReference type="GeneID" id="801604"/>
<dbReference type="GO" id="GO:0033115">
    <property type="term" value="C:cyanelle thylakoid membrane"/>
    <property type="evidence" value="ECO:0007669"/>
    <property type="project" value="UniProtKB-SubCell"/>
</dbReference>
<dbReference type="GO" id="GO:0030089">
    <property type="term" value="C:phycobilisome"/>
    <property type="evidence" value="ECO:0007669"/>
    <property type="project" value="UniProtKB-KW"/>
</dbReference>
<dbReference type="GO" id="GO:0015979">
    <property type="term" value="P:photosynthesis"/>
    <property type="evidence" value="ECO:0007669"/>
    <property type="project" value="UniProtKB-KW"/>
</dbReference>
<dbReference type="CDD" id="cd12125">
    <property type="entry name" value="APC_alpha"/>
    <property type="match status" value="1"/>
</dbReference>
<dbReference type="Gene3D" id="1.10.490.20">
    <property type="entry name" value="Phycocyanins"/>
    <property type="match status" value="1"/>
</dbReference>
<dbReference type="InterPro" id="IPR009050">
    <property type="entry name" value="Globin-like_sf"/>
</dbReference>
<dbReference type="InterPro" id="IPR012128">
    <property type="entry name" value="Phycobilisome_asu/bsu"/>
</dbReference>
<dbReference type="InterPro" id="IPR038719">
    <property type="entry name" value="Phycobilisome_asu/bsu_sf"/>
</dbReference>
<dbReference type="PANTHER" id="PTHR34011:SF2">
    <property type="entry name" value="ALLOPHYCOCYANIN ALPHA CHAIN"/>
    <property type="match status" value="1"/>
</dbReference>
<dbReference type="PANTHER" id="PTHR34011">
    <property type="entry name" value="PHYCOBILISOME 32.1 KDA LINKER POLYPEPTIDE, PHYCOCYANIN-ASSOCIATED, ROD 2-RELATED"/>
    <property type="match status" value="1"/>
</dbReference>
<dbReference type="Pfam" id="PF00502">
    <property type="entry name" value="Phycobilisome"/>
    <property type="match status" value="1"/>
</dbReference>
<dbReference type="PIRSF" id="PIRSF000081">
    <property type="entry name" value="Phycocyanin"/>
    <property type="match status" value="1"/>
</dbReference>
<dbReference type="SUPFAM" id="SSF46458">
    <property type="entry name" value="Globin-like"/>
    <property type="match status" value="1"/>
</dbReference>
<proteinExistence type="inferred from homology"/>
<reference key="1">
    <citation type="journal article" date="1990" name="Nucleic Acids Res.">
        <title>A novel allophycocyanin gene (apcD) from Cyanophora paradoxa cyanelles.</title>
        <authorList>
            <person name="Michalowski C.B."/>
            <person name="Bohnert H.J."/>
            <person name="Loeffelhardt W."/>
        </authorList>
    </citation>
    <scope>NUCLEOTIDE SEQUENCE [GENOMIC DNA]</scope>
    <source>
        <strain>UTEX LB 555 / Pringsheim</strain>
    </source>
</reference>
<reference key="2">
    <citation type="journal article" date="1995" name="Plant Mol. Biol. Rep.">
        <title>Nucleotide sequence of the cyanelle DNA from Cyanophora paradoxa.</title>
        <authorList>
            <person name="Stirewalt V.L."/>
            <person name="Michalowski C.B."/>
            <person name="Loeffelhardt W."/>
            <person name="Bohnert H.J."/>
            <person name="Bryant D.A."/>
        </authorList>
    </citation>
    <scope>NUCLEOTIDE SEQUENCE [LARGE SCALE GENOMIC DNA]</scope>
    <source>
        <strain>UTEX LB 555 / Pringsheim</strain>
    </source>
</reference>
<reference key="3">
    <citation type="book" date="1997" name="Eukaryotism and symbiosis">
        <title>The complete sequence of the cyanelle genome of Cyanophora paradoxa: the genetic complexity of a primitive plastid.</title>
        <editorList>
            <person name="Schenk H.E.A."/>
            <person name="Herrmann R."/>
            <person name="Jeon K.W."/>
            <person name="Mueller N.E."/>
            <person name="Schwemmler W."/>
        </editorList>
        <authorList>
            <person name="Loeffelhardt W."/>
            <person name="Stirewalt V.L."/>
            <person name="Michalowski C.B."/>
            <person name="Annarella M."/>
            <person name="Farley J.Y."/>
            <person name="Schluchter W.M."/>
            <person name="Chung S."/>
            <person name="Newmann-Spallart C."/>
            <person name="Steiner J.M."/>
            <person name="Jakowitsch J."/>
            <person name="Bohnert H.J."/>
            <person name="Bryant D.A."/>
        </authorList>
    </citation>
    <scope>NUCLEOTIDE SEQUENCE [LARGE SCALE GENOMIC DNA]</scope>
    <source>
        <strain>UTEX LB 555 / Pringsheim</strain>
    </source>
</reference>
<sequence>MSLVTQILLNADDELRYPTSGELETIKSFLKTGNKRISIINNIAQNEKKIIEQASKQLWQVHPEYISPGGNAYGARQRSLCLRDYGWYLRLVTYGILAGDQRPIEKIGIIGVREMYNSLGVPVIGMVDSITALKNSTLSVLSPEDSEEVKPYFDYIIQAMAA</sequence>
<organism>
    <name type="scientific">Cyanophora paradoxa</name>
    <dbReference type="NCBI Taxonomy" id="2762"/>
    <lineage>
        <taxon>Eukaryota</taxon>
        <taxon>Glaucocystophyceae</taxon>
        <taxon>Cyanophoraceae</taxon>
        <taxon>Cyanophora</taxon>
    </lineage>
</organism>
<keyword id="KW-0042">Antenna complex</keyword>
<keyword id="KW-0089">Bile pigment</keyword>
<keyword id="KW-0157">Chromophore</keyword>
<keyword id="KW-0194">Cyanelle</keyword>
<keyword id="KW-0249">Electron transport</keyword>
<keyword id="KW-0472">Membrane</keyword>
<keyword id="KW-0488">Methylation</keyword>
<keyword id="KW-0602">Photosynthesis</keyword>
<keyword id="KW-0605">Phycobilisome</keyword>
<keyword id="KW-0934">Plastid</keyword>
<keyword id="KW-0793">Thylakoid</keyword>
<keyword id="KW-0813">Transport</keyword>
<gene>
    <name type="primary">apcD</name>
</gene>
<geneLocation type="cyanelle"/>